<reference key="1">
    <citation type="journal article" date="2005" name="J. Bacteriol.">
        <title>Genomic sequence of an otitis media isolate of nontypeable Haemophilus influenzae: comparative study with H. influenzae serotype d, strain KW20.</title>
        <authorList>
            <person name="Harrison A."/>
            <person name="Dyer D.W."/>
            <person name="Gillaspy A."/>
            <person name="Ray W.C."/>
            <person name="Mungur R."/>
            <person name="Carson M.B."/>
            <person name="Zhong H."/>
            <person name="Gipson J."/>
            <person name="Gipson M."/>
            <person name="Johnson L.S."/>
            <person name="Lewis L."/>
            <person name="Bakaletz L.O."/>
            <person name="Munson R.S. Jr."/>
        </authorList>
    </citation>
    <scope>NUCLEOTIDE SEQUENCE [LARGE SCALE GENOMIC DNA]</scope>
    <source>
        <strain>86-028NP</strain>
    </source>
</reference>
<dbReference type="EC" id="4.2.1.20" evidence="1"/>
<dbReference type="EMBL" id="CP000057">
    <property type="protein sequence ID" value="AAX88492.1"/>
    <property type="molecule type" value="Genomic_DNA"/>
</dbReference>
<dbReference type="RefSeq" id="WP_011272596.1">
    <property type="nucleotide sequence ID" value="NC_007146.2"/>
</dbReference>
<dbReference type="SMR" id="Q4QKF5"/>
<dbReference type="KEGG" id="hit:NTHI1702"/>
<dbReference type="HOGENOM" id="CLU_016734_3_1_6"/>
<dbReference type="UniPathway" id="UPA00035">
    <property type="reaction ID" value="UER00044"/>
</dbReference>
<dbReference type="Proteomes" id="UP000002525">
    <property type="component" value="Chromosome"/>
</dbReference>
<dbReference type="GO" id="GO:0005737">
    <property type="term" value="C:cytoplasm"/>
    <property type="evidence" value="ECO:0007669"/>
    <property type="project" value="TreeGrafter"/>
</dbReference>
<dbReference type="GO" id="GO:0004834">
    <property type="term" value="F:tryptophan synthase activity"/>
    <property type="evidence" value="ECO:0007669"/>
    <property type="project" value="UniProtKB-UniRule"/>
</dbReference>
<dbReference type="CDD" id="cd06446">
    <property type="entry name" value="Trp-synth_B"/>
    <property type="match status" value="1"/>
</dbReference>
<dbReference type="FunFam" id="3.40.50.1100:FF:000001">
    <property type="entry name" value="Tryptophan synthase beta chain"/>
    <property type="match status" value="1"/>
</dbReference>
<dbReference type="FunFam" id="3.40.50.1100:FF:000004">
    <property type="entry name" value="Tryptophan synthase beta chain"/>
    <property type="match status" value="1"/>
</dbReference>
<dbReference type="Gene3D" id="3.40.50.1100">
    <property type="match status" value="2"/>
</dbReference>
<dbReference type="HAMAP" id="MF_00133">
    <property type="entry name" value="Trp_synth_beta"/>
    <property type="match status" value="1"/>
</dbReference>
<dbReference type="InterPro" id="IPR006653">
    <property type="entry name" value="Trp_synth_b_CS"/>
</dbReference>
<dbReference type="InterPro" id="IPR006654">
    <property type="entry name" value="Trp_synth_beta"/>
</dbReference>
<dbReference type="InterPro" id="IPR023026">
    <property type="entry name" value="Trp_synth_beta/beta-like"/>
</dbReference>
<dbReference type="InterPro" id="IPR001926">
    <property type="entry name" value="TrpB-like_PALP"/>
</dbReference>
<dbReference type="InterPro" id="IPR036052">
    <property type="entry name" value="TrpB-like_PALP_sf"/>
</dbReference>
<dbReference type="NCBIfam" id="TIGR00263">
    <property type="entry name" value="trpB"/>
    <property type="match status" value="1"/>
</dbReference>
<dbReference type="PANTHER" id="PTHR48077:SF3">
    <property type="entry name" value="TRYPTOPHAN SYNTHASE"/>
    <property type="match status" value="1"/>
</dbReference>
<dbReference type="PANTHER" id="PTHR48077">
    <property type="entry name" value="TRYPTOPHAN SYNTHASE-RELATED"/>
    <property type="match status" value="1"/>
</dbReference>
<dbReference type="Pfam" id="PF00291">
    <property type="entry name" value="PALP"/>
    <property type="match status" value="1"/>
</dbReference>
<dbReference type="PIRSF" id="PIRSF001413">
    <property type="entry name" value="Trp_syn_beta"/>
    <property type="match status" value="1"/>
</dbReference>
<dbReference type="SUPFAM" id="SSF53686">
    <property type="entry name" value="Tryptophan synthase beta subunit-like PLP-dependent enzymes"/>
    <property type="match status" value="1"/>
</dbReference>
<dbReference type="PROSITE" id="PS00168">
    <property type="entry name" value="TRP_SYNTHASE_BETA"/>
    <property type="match status" value="1"/>
</dbReference>
<gene>
    <name evidence="1" type="primary">trpB</name>
    <name type="ordered locus">NTHI1702</name>
</gene>
<keyword id="KW-0028">Amino-acid biosynthesis</keyword>
<keyword id="KW-0057">Aromatic amino acid biosynthesis</keyword>
<keyword id="KW-0456">Lyase</keyword>
<keyword id="KW-0663">Pyridoxal phosphate</keyword>
<keyword id="KW-0822">Tryptophan biosynthesis</keyword>
<evidence type="ECO:0000255" key="1">
    <source>
        <dbReference type="HAMAP-Rule" id="MF_00133"/>
    </source>
</evidence>
<feature type="chain" id="PRO_1000076388" description="Tryptophan synthase beta chain">
    <location>
        <begin position="1"/>
        <end position="397"/>
    </location>
</feature>
<feature type="modified residue" description="N6-(pyridoxal phosphate)lysine" evidence="1">
    <location>
        <position position="88"/>
    </location>
</feature>
<name>TRPB_HAEI8</name>
<sequence length="397" mass="43257">MSDTLLNPYFGEFGGMYVPEILVPVLKQLEQAFVEAQNDPTFQAEFADLLKNYAGRPTALTLCRNLTKCTKTKLYLKREDLLHGGAHKTNQVLGQILLAKRMGKTRIIAETGAGQHGVATALACAMLDMPCRVYMGAKDVERQSPNVFRMRLMGAEVIPVEKGSCSLKDACCEAMRDWSANYETTHYLLGTAAGPHPFPTIVREFQKMIGEETKRQILEREGRLPDAVIAAVGGGSNAIGMFTDFIDEPNVRLIGVEPAGKGIESGEHGAPLGHAKVGIYFGMKSPLMQTEDGQVEESYSVSAGLDFPSVGPQHAYLNEIGRADYVSITDEEALNAFQELAKHEGIIPALESSHALAYALKLIKQNPEKEQLLVVNLSGRGDKDIFTVDKILNGGTN</sequence>
<proteinExistence type="inferred from homology"/>
<accession>Q4QKF5</accession>
<organism>
    <name type="scientific">Haemophilus influenzae (strain 86-028NP)</name>
    <dbReference type="NCBI Taxonomy" id="281310"/>
    <lineage>
        <taxon>Bacteria</taxon>
        <taxon>Pseudomonadati</taxon>
        <taxon>Pseudomonadota</taxon>
        <taxon>Gammaproteobacteria</taxon>
        <taxon>Pasteurellales</taxon>
        <taxon>Pasteurellaceae</taxon>
        <taxon>Haemophilus</taxon>
    </lineage>
</organism>
<comment type="function">
    <text evidence="1">The beta subunit is responsible for the synthesis of L-tryptophan from indole and L-serine.</text>
</comment>
<comment type="catalytic activity">
    <reaction evidence="1">
        <text>(1S,2R)-1-C-(indol-3-yl)glycerol 3-phosphate + L-serine = D-glyceraldehyde 3-phosphate + L-tryptophan + H2O</text>
        <dbReference type="Rhea" id="RHEA:10532"/>
        <dbReference type="ChEBI" id="CHEBI:15377"/>
        <dbReference type="ChEBI" id="CHEBI:33384"/>
        <dbReference type="ChEBI" id="CHEBI:57912"/>
        <dbReference type="ChEBI" id="CHEBI:58866"/>
        <dbReference type="ChEBI" id="CHEBI:59776"/>
        <dbReference type="EC" id="4.2.1.20"/>
    </reaction>
</comment>
<comment type="cofactor">
    <cofactor evidence="1">
        <name>pyridoxal 5'-phosphate</name>
        <dbReference type="ChEBI" id="CHEBI:597326"/>
    </cofactor>
</comment>
<comment type="pathway">
    <text evidence="1">Amino-acid biosynthesis; L-tryptophan biosynthesis; L-tryptophan from chorismate: step 5/5.</text>
</comment>
<comment type="subunit">
    <text evidence="1">Tetramer of two alpha and two beta chains.</text>
</comment>
<comment type="similarity">
    <text evidence="1">Belongs to the TrpB family.</text>
</comment>
<protein>
    <recommendedName>
        <fullName evidence="1">Tryptophan synthase beta chain</fullName>
        <ecNumber evidence="1">4.2.1.20</ecNumber>
    </recommendedName>
</protein>